<keyword id="KW-1015">Disulfide bond</keyword>
<keyword id="KW-0256">Endoplasmic reticulum</keyword>
<keyword id="KW-0325">Glycoprotein</keyword>
<keyword id="KW-0333">Golgi apparatus</keyword>
<keyword id="KW-0393">Immunoglobulin domain</keyword>
<keyword id="KW-0472">Membrane</keyword>
<keyword id="KW-0597">Phosphoprotein</keyword>
<keyword id="KW-1185">Reference proteome</keyword>
<keyword id="KW-0677">Repeat</keyword>
<keyword id="KW-0732">Signal</keyword>
<keyword id="KW-0812">Transmembrane</keyword>
<keyword id="KW-1133">Transmembrane helix</keyword>
<organism>
    <name type="scientific">Mus musculus</name>
    <name type="common">Mouse</name>
    <dbReference type="NCBI Taxonomy" id="10090"/>
    <lineage>
        <taxon>Eukaryota</taxon>
        <taxon>Metazoa</taxon>
        <taxon>Chordata</taxon>
        <taxon>Craniata</taxon>
        <taxon>Vertebrata</taxon>
        <taxon>Euteleostomi</taxon>
        <taxon>Mammalia</taxon>
        <taxon>Eutheria</taxon>
        <taxon>Euarchontoglires</taxon>
        <taxon>Glires</taxon>
        <taxon>Rodentia</taxon>
        <taxon>Myomorpha</taxon>
        <taxon>Muroidea</taxon>
        <taxon>Muridae</taxon>
        <taxon>Murinae</taxon>
        <taxon>Mus</taxon>
        <taxon>Mus</taxon>
    </lineage>
</organism>
<feature type="signal peptide" evidence="4">
    <location>
        <begin position="1"/>
        <end position="21"/>
    </location>
</feature>
<feature type="chain" id="PRO_0000014763" description="Prostaglandin F2 receptor negative regulator">
    <location>
        <begin position="22"/>
        <end position="879"/>
    </location>
</feature>
<feature type="topological domain" description="Extracellular" evidence="4">
    <location>
        <begin position="22"/>
        <end position="832"/>
    </location>
</feature>
<feature type="transmembrane region" description="Helical" evidence="4">
    <location>
        <begin position="833"/>
        <end position="853"/>
    </location>
</feature>
<feature type="topological domain" description="Cytoplasmic" evidence="4">
    <location>
        <begin position="854"/>
        <end position="879"/>
    </location>
</feature>
<feature type="domain" description="Ig-like C2-type 1">
    <location>
        <begin position="22"/>
        <end position="137"/>
    </location>
</feature>
<feature type="domain" description="Ig-like C2-type 2">
    <location>
        <begin position="149"/>
        <end position="263"/>
    </location>
</feature>
<feature type="domain" description="Ig-like C2-type 3">
    <location>
        <begin position="276"/>
        <end position="389"/>
    </location>
</feature>
<feature type="domain" description="Ig-like C2-type 4">
    <location>
        <begin position="406"/>
        <end position="536"/>
    </location>
</feature>
<feature type="domain" description="Ig-like C2-type 5">
    <location>
        <begin position="544"/>
        <end position="662"/>
    </location>
</feature>
<feature type="domain" description="Ig-like C2-type 6">
    <location>
        <begin position="688"/>
        <end position="813"/>
    </location>
</feature>
<feature type="short sequence motif" description="Cell attachment site" evidence="4">
    <location>
        <begin position="89"/>
        <end position="91"/>
    </location>
</feature>
<feature type="short sequence motif" description="Endoplasmic reticulum retention signal">
    <location>
        <begin position="424"/>
        <end position="427"/>
    </location>
</feature>
<feature type="short sequence motif" description="Cell attachment site" evidence="4">
    <location>
        <begin position="703"/>
        <end position="705"/>
    </location>
</feature>
<feature type="modified residue" description="Phosphothreonine" evidence="2">
    <location>
        <position position="271"/>
    </location>
</feature>
<feature type="glycosylation site" description="N-linked (GlcNAc...) asparagine" evidence="4">
    <location>
        <position position="44"/>
    </location>
</feature>
<feature type="glycosylation site" description="N-linked (GlcNAc...) asparagine" evidence="6">
    <location>
        <position position="300"/>
    </location>
</feature>
<feature type="glycosylation site" description="N-linked (GlcNAc...) asparagine" evidence="4">
    <location>
        <position position="383"/>
    </location>
</feature>
<feature type="glycosylation site" description="N-linked (GlcNAc...) asparagine" evidence="4">
    <location>
        <position position="413"/>
    </location>
</feature>
<feature type="glycosylation site" description="N-linked (GlcNAc...) asparagine" evidence="4">
    <location>
        <position position="525"/>
    </location>
</feature>
<feature type="glycosylation site" description="N-linked (GlcNAc...) asparagine" evidence="6 7">
    <location>
        <position position="600"/>
    </location>
</feature>
<feature type="glycosylation site" description="N-linked (GlcNAc...) asparagine" evidence="6 7">
    <location>
        <position position="618"/>
    </location>
</feature>
<feature type="glycosylation site" description="N-linked (GlcNAc...) asparagine" evidence="6">
    <location>
        <position position="691"/>
    </location>
</feature>
<feature type="disulfide bond" evidence="5">
    <location>
        <begin position="43"/>
        <end position="119"/>
    </location>
</feature>
<feature type="disulfide bond" evidence="5">
    <location>
        <begin position="169"/>
        <end position="247"/>
    </location>
</feature>
<feature type="disulfide bond" evidence="5">
    <location>
        <begin position="299"/>
        <end position="373"/>
    </location>
</feature>
<feature type="disulfide bond" evidence="5">
    <location>
        <begin position="429"/>
        <end position="515"/>
    </location>
</feature>
<feature type="disulfide bond" evidence="5">
    <location>
        <begin position="571"/>
        <end position="655"/>
    </location>
</feature>
<feature type="disulfide bond" evidence="5">
    <location>
        <begin position="711"/>
        <end position="793"/>
    </location>
</feature>
<feature type="sequence conflict" description="In Ref. 1; AAD38383." evidence="10" ref="1">
    <original>V</original>
    <variation>A</variation>
    <location>
        <position position="128"/>
    </location>
</feature>
<feature type="sequence conflict" description="In Ref. 1; AAD38383." evidence="10" ref="1">
    <original>V</original>
    <variation>M</variation>
    <location>
        <position position="136"/>
    </location>
</feature>
<feature type="sequence conflict" description="In Ref. 1; AAD38383." evidence="10" ref="1">
    <original>V</original>
    <variation>E</variation>
    <location>
        <position position="267"/>
    </location>
</feature>
<feature type="sequence conflict" description="In Ref. 1; AAD38383." evidence="10" ref="1">
    <original>F</original>
    <variation>L</variation>
    <location>
        <position position="500"/>
    </location>
</feature>
<feature type="sequence conflict" description="In Ref. 1; AAD38383." evidence="10" ref="1">
    <original>T</original>
    <variation>A</variation>
    <location>
        <position position="521"/>
    </location>
</feature>
<feature type="sequence conflict" description="In Ref. 1; AAD38383." evidence="10" ref="1">
    <original>V</original>
    <variation>D</variation>
    <location>
        <position position="647"/>
    </location>
</feature>
<reference key="1">
    <citation type="journal article" date="2000" name="J. Bone Miner. Res.">
        <title>The monoclonal antibodies 18d7/91f2 recognize a receptor regulatory protein on mouse bone marrow stromal cells.</title>
        <authorList>
            <person name="Weng L."/>
            <person name="Falla N."/>
            <person name="Van den Heuvel R."/>
            <person name="Raymackers J."/>
            <person name="Karperien M."/>
            <person name="Van Bezooijen R."/>
            <person name="Van Vlasselaer P."/>
            <person name="Lowik C."/>
            <person name="Merregaert J."/>
        </authorList>
    </citation>
    <scope>NUCLEOTIDE SEQUENCE [MRNA]</scope>
</reference>
<reference key="2">
    <citation type="journal article" date="2009" name="PLoS Biol.">
        <title>Lineage-specific biology revealed by a finished genome assembly of the mouse.</title>
        <authorList>
            <person name="Church D.M."/>
            <person name="Goodstadt L."/>
            <person name="Hillier L.W."/>
            <person name="Zody M.C."/>
            <person name="Goldstein S."/>
            <person name="She X."/>
            <person name="Bult C.J."/>
            <person name="Agarwala R."/>
            <person name="Cherry J.L."/>
            <person name="DiCuccio M."/>
            <person name="Hlavina W."/>
            <person name="Kapustin Y."/>
            <person name="Meric P."/>
            <person name="Maglott D."/>
            <person name="Birtle Z."/>
            <person name="Marques A.C."/>
            <person name="Graves T."/>
            <person name="Zhou S."/>
            <person name="Teague B."/>
            <person name="Potamousis K."/>
            <person name="Churas C."/>
            <person name="Place M."/>
            <person name="Herschleb J."/>
            <person name="Runnheim R."/>
            <person name="Forrest D."/>
            <person name="Amos-Landgraf J."/>
            <person name="Schwartz D.C."/>
            <person name="Cheng Z."/>
            <person name="Lindblad-Toh K."/>
            <person name="Eichler E.E."/>
            <person name="Ponting C.P."/>
        </authorList>
    </citation>
    <scope>NUCLEOTIDE SEQUENCE [LARGE SCALE GENOMIC DNA]</scope>
    <source>
        <strain>C57BL/6J</strain>
    </source>
</reference>
<reference key="3">
    <citation type="journal article" date="2004" name="Genome Res.">
        <title>The status, quality, and expansion of the NIH full-length cDNA project: the Mammalian Gene Collection (MGC).</title>
        <authorList>
            <consortium name="The MGC Project Team"/>
        </authorList>
    </citation>
    <scope>NUCLEOTIDE SEQUENCE [LARGE SCALE MRNA]</scope>
    <source>
        <tissue>Brain</tissue>
    </source>
</reference>
<reference key="4">
    <citation type="journal article" date="2009" name="Mol. Cell. Proteomics">
        <title>The mouse C2C12 myoblast cell surface N-linked glycoproteome: identification, glycosite occupancy, and membrane orientation.</title>
        <authorList>
            <person name="Gundry R.L."/>
            <person name="Raginski K."/>
            <person name="Tarasova Y."/>
            <person name="Tchernyshyov I."/>
            <person name="Bausch-Fluck D."/>
            <person name="Elliott S.T."/>
            <person name="Boheler K.R."/>
            <person name="Van Eyk J.E."/>
            <person name="Wollscheid B."/>
        </authorList>
    </citation>
    <scope>GLYCOSYLATION [LARGE SCALE ANALYSIS] AT ASN-600 AND ASN-618</scope>
    <source>
        <tissue>Myoblast</tissue>
    </source>
</reference>
<reference key="5">
    <citation type="journal article" date="2009" name="Nat. Biotechnol.">
        <title>Mass-spectrometric identification and relative quantification of N-linked cell surface glycoproteins.</title>
        <authorList>
            <person name="Wollscheid B."/>
            <person name="Bausch-Fluck D."/>
            <person name="Henderson C."/>
            <person name="O'Brien R."/>
            <person name="Bibel M."/>
            <person name="Schiess R."/>
            <person name="Aebersold R."/>
            <person name="Watts J.D."/>
        </authorList>
    </citation>
    <scope>GLYCOSYLATION [LARGE SCALE ANALYSIS] AT ASN-300; ASN-600; ASN-618 AND ASN-691</scope>
</reference>
<reference key="6">
    <citation type="journal article" date="2010" name="Cell">
        <title>A tissue-specific atlas of mouse protein phosphorylation and expression.</title>
        <authorList>
            <person name="Huttlin E.L."/>
            <person name="Jedrychowski M.P."/>
            <person name="Elias J.E."/>
            <person name="Goswami T."/>
            <person name="Rad R."/>
            <person name="Beausoleil S.A."/>
            <person name="Villen J."/>
            <person name="Haas W."/>
            <person name="Sowa M.E."/>
            <person name="Gygi S.P."/>
        </authorList>
    </citation>
    <scope>IDENTIFICATION BY MASS SPECTROMETRY [LARGE SCALE ANALYSIS]</scope>
    <source>
        <tissue>Brain</tissue>
        <tissue>Heart</tissue>
        <tissue>Kidney</tissue>
        <tissue>Liver</tissue>
        <tissue>Lung</tissue>
        <tissue>Pancreas</tissue>
    </source>
</reference>
<reference key="7">
    <citation type="journal article" date="2013" name="Nat. Commun.">
        <title>Normal muscle regeneration requires tight control of muscle cell fusion by tetraspanins CD9 and CD81.</title>
        <authorList>
            <person name="Charrin S."/>
            <person name="Latil M."/>
            <person name="Soave S."/>
            <person name="Polesskaya A."/>
            <person name="Chretien F."/>
            <person name="Boucheix C."/>
            <person name="Rubinstein E."/>
        </authorList>
    </citation>
    <scope>FUNCTION</scope>
    <scope>TISSUE SPECIFICITY</scope>
    <scope>INTERACTION WITH CD81</scope>
    <scope>INTERACTION WITH CD9</scope>
    <scope>INTERACTION WITH IGSF8</scope>
</reference>
<accession>Q9WV91</accession>
<accession>Q5SRA8</accession>
<proteinExistence type="evidence at protein level"/>
<protein>
    <recommendedName>
        <fullName>Prostaglandin F2 receptor negative regulator</fullName>
    </recommendedName>
    <alternativeName>
        <fullName>CD9 partner 1</fullName>
        <shortName evidence="9">CD9P-1</shortName>
    </alternativeName>
    <alternativeName>
        <fullName>Glu-Trp-Ile EWI motif-containing protein F</fullName>
        <shortName>EWI-F</shortName>
    </alternativeName>
    <alternativeName>
        <fullName>Prostaglandin F2-alpha receptor regulatory protein</fullName>
    </alternativeName>
    <alternativeName>
        <fullName>Prostaglandin F2-alpha receptor-associated protein</fullName>
    </alternativeName>
    <cdAntigenName>CD315</cdAntigenName>
</protein>
<dbReference type="EMBL" id="AF152344">
    <property type="protein sequence ID" value="AAD38383.1"/>
    <property type="molecule type" value="mRNA"/>
</dbReference>
<dbReference type="EMBL" id="AL645930">
    <property type="status" value="NOT_ANNOTATED_CDS"/>
    <property type="molecule type" value="Genomic_DNA"/>
</dbReference>
<dbReference type="EMBL" id="AL669872">
    <property type="status" value="NOT_ANNOTATED_CDS"/>
    <property type="molecule type" value="Genomic_DNA"/>
</dbReference>
<dbReference type="EMBL" id="AL669937">
    <property type="status" value="NOT_ANNOTATED_CDS"/>
    <property type="molecule type" value="Genomic_DNA"/>
</dbReference>
<dbReference type="EMBL" id="AL672281">
    <property type="status" value="NOT_ANNOTATED_CDS"/>
    <property type="molecule type" value="Genomic_DNA"/>
</dbReference>
<dbReference type="EMBL" id="BC145713">
    <property type="protein sequence ID" value="AAI45714.1"/>
    <property type="molecule type" value="mRNA"/>
</dbReference>
<dbReference type="EMBL" id="BC145715">
    <property type="protein sequence ID" value="AAI45716.1"/>
    <property type="molecule type" value="mRNA"/>
</dbReference>
<dbReference type="CCDS" id="CCDS17680.1"/>
<dbReference type="RefSeq" id="NP_035327.2">
    <property type="nucleotide sequence ID" value="NM_011197.3"/>
</dbReference>
<dbReference type="BioGRID" id="202459">
    <property type="interactions" value="2"/>
</dbReference>
<dbReference type="FunCoup" id="Q9WV91">
    <property type="interactions" value="607"/>
</dbReference>
<dbReference type="STRING" id="10090.ENSMUSP00000099755"/>
<dbReference type="GlyConnect" id="2616">
    <property type="glycosylation" value="1 N-Linked glycan (2 sites)"/>
</dbReference>
<dbReference type="GlyCosmos" id="Q9WV91">
    <property type="glycosylation" value="8 sites, 1 glycan"/>
</dbReference>
<dbReference type="GlyGen" id="Q9WV91">
    <property type="glycosylation" value="10 sites, 6 N-linked glycans (5 sites), 1 O-linked glycan (1 site)"/>
</dbReference>
<dbReference type="iPTMnet" id="Q9WV91"/>
<dbReference type="PhosphoSitePlus" id="Q9WV91"/>
<dbReference type="SwissPalm" id="Q9WV91"/>
<dbReference type="PaxDb" id="10090-ENSMUSP00000099755"/>
<dbReference type="ProteomicsDB" id="271798"/>
<dbReference type="Pumba" id="Q9WV91"/>
<dbReference type="Antibodypedia" id="2447">
    <property type="antibodies" value="149 antibodies from 27 providers"/>
</dbReference>
<dbReference type="DNASU" id="19221"/>
<dbReference type="Ensembl" id="ENSMUST00000102694.4">
    <property type="protein sequence ID" value="ENSMUSP00000099755.4"/>
    <property type="gene ID" value="ENSMUSG00000027864.10"/>
</dbReference>
<dbReference type="GeneID" id="19221"/>
<dbReference type="KEGG" id="mmu:19221"/>
<dbReference type="UCSC" id="uc008qre.1">
    <property type="organism name" value="mouse"/>
</dbReference>
<dbReference type="AGR" id="MGI:1277114"/>
<dbReference type="CTD" id="5738"/>
<dbReference type="MGI" id="MGI:1277114">
    <property type="gene designation" value="Ptgfrn"/>
</dbReference>
<dbReference type="VEuPathDB" id="HostDB:ENSMUSG00000027864"/>
<dbReference type="eggNOG" id="ENOG502QVD2">
    <property type="taxonomic scope" value="Eukaryota"/>
</dbReference>
<dbReference type="GeneTree" id="ENSGT00940000158367"/>
<dbReference type="HOGENOM" id="CLU_005187_1_0_1"/>
<dbReference type="InParanoid" id="Q9WV91"/>
<dbReference type="OMA" id="MPVSILW"/>
<dbReference type="OrthoDB" id="9873136at2759"/>
<dbReference type="PhylomeDB" id="Q9WV91"/>
<dbReference type="TreeFam" id="TF332702"/>
<dbReference type="BioGRID-ORCS" id="19221">
    <property type="hits" value="4 hits in 79 CRISPR screens"/>
</dbReference>
<dbReference type="ChiTaRS" id="Ptgfrn">
    <property type="organism name" value="mouse"/>
</dbReference>
<dbReference type="PRO" id="PR:Q9WV91"/>
<dbReference type="Proteomes" id="UP000000589">
    <property type="component" value="Chromosome 3"/>
</dbReference>
<dbReference type="RNAct" id="Q9WV91">
    <property type="molecule type" value="protein"/>
</dbReference>
<dbReference type="Bgee" id="ENSMUSG00000027864">
    <property type="expression patterns" value="Expressed in umbilical cord and 224 other cell types or tissues"/>
</dbReference>
<dbReference type="GO" id="GO:0005789">
    <property type="term" value="C:endoplasmic reticulum membrane"/>
    <property type="evidence" value="ECO:0007669"/>
    <property type="project" value="UniProtKB-SubCell"/>
</dbReference>
<dbReference type="GO" id="GO:0005794">
    <property type="term" value="C:Golgi apparatus"/>
    <property type="evidence" value="ECO:0007669"/>
    <property type="project" value="UniProtKB-SubCell"/>
</dbReference>
<dbReference type="GO" id="GO:0034389">
    <property type="term" value="P:lipid droplet organization"/>
    <property type="evidence" value="ECO:0000315"/>
    <property type="project" value="MGI"/>
</dbReference>
<dbReference type="GO" id="GO:0014905">
    <property type="term" value="P:myoblast fusion involved in skeletal muscle regeneration"/>
    <property type="evidence" value="ECO:0000315"/>
    <property type="project" value="UniProtKB"/>
</dbReference>
<dbReference type="FunFam" id="2.60.40.10:FF:000191">
    <property type="entry name" value="Immunoglobulin superfamily member 3"/>
    <property type="match status" value="1"/>
</dbReference>
<dbReference type="FunFam" id="2.60.40.10:FF:001070">
    <property type="entry name" value="Prostaglandin F2 receptor inhibitor"/>
    <property type="match status" value="1"/>
</dbReference>
<dbReference type="FunFam" id="2.60.40.10:FF:002026">
    <property type="entry name" value="Prostaglandin F2 receptor inhibitor"/>
    <property type="match status" value="1"/>
</dbReference>
<dbReference type="FunFam" id="2.60.40.10:FF:000854">
    <property type="entry name" value="Prostaglandin F2 receptor negative regulator"/>
    <property type="match status" value="1"/>
</dbReference>
<dbReference type="FunFam" id="2.60.40.10:FF:000995">
    <property type="entry name" value="prostaglandin F2 receptor negative regulator"/>
    <property type="match status" value="1"/>
</dbReference>
<dbReference type="Gene3D" id="2.60.40.10">
    <property type="entry name" value="Immunoglobulins"/>
    <property type="match status" value="5"/>
</dbReference>
<dbReference type="InterPro" id="IPR007110">
    <property type="entry name" value="Ig-like_dom"/>
</dbReference>
<dbReference type="InterPro" id="IPR036179">
    <property type="entry name" value="Ig-like_dom_sf"/>
</dbReference>
<dbReference type="InterPro" id="IPR013783">
    <property type="entry name" value="Ig-like_fold"/>
</dbReference>
<dbReference type="InterPro" id="IPR003599">
    <property type="entry name" value="Ig_sub"/>
</dbReference>
<dbReference type="InterPro" id="IPR013106">
    <property type="entry name" value="Ig_V-set"/>
</dbReference>
<dbReference type="InterPro" id="IPR051102">
    <property type="entry name" value="IgSF_V-set/TM_domain"/>
</dbReference>
<dbReference type="PANTHER" id="PTHR12207:SF3">
    <property type="entry name" value="PROSTAGLANDIN F2 RECEPTOR NEGATIVE REGULATOR"/>
    <property type="match status" value="1"/>
</dbReference>
<dbReference type="PANTHER" id="PTHR12207">
    <property type="entry name" value="V-SET AND TRANSMEMBRANE DOMAIN-CONTAINING PROTEIN"/>
    <property type="match status" value="1"/>
</dbReference>
<dbReference type="Pfam" id="PF07686">
    <property type="entry name" value="V-set"/>
    <property type="match status" value="2"/>
</dbReference>
<dbReference type="SMART" id="SM00409">
    <property type="entry name" value="IG"/>
    <property type="match status" value="6"/>
</dbReference>
<dbReference type="SMART" id="SM00406">
    <property type="entry name" value="IGv"/>
    <property type="match status" value="3"/>
</dbReference>
<dbReference type="SUPFAM" id="SSF48726">
    <property type="entry name" value="Immunoglobulin"/>
    <property type="match status" value="5"/>
</dbReference>
<dbReference type="PROSITE" id="PS50835">
    <property type="entry name" value="IG_LIKE"/>
    <property type="match status" value="5"/>
</dbReference>
<evidence type="ECO:0000250" key="1"/>
<evidence type="ECO:0000250" key="2">
    <source>
        <dbReference type="UniProtKB" id="Q62786"/>
    </source>
</evidence>
<evidence type="ECO:0000250" key="3">
    <source>
        <dbReference type="UniProtKB" id="Q9P2B2"/>
    </source>
</evidence>
<evidence type="ECO:0000255" key="4"/>
<evidence type="ECO:0000255" key="5">
    <source>
        <dbReference type="PROSITE-ProRule" id="PRU00114"/>
    </source>
</evidence>
<evidence type="ECO:0000269" key="6">
    <source>
    </source>
</evidence>
<evidence type="ECO:0000269" key="7">
    <source>
    </source>
</evidence>
<evidence type="ECO:0000269" key="8">
    <source>
    </source>
</evidence>
<evidence type="ECO:0000303" key="9">
    <source>
    </source>
</evidence>
<evidence type="ECO:0000305" key="10"/>
<gene>
    <name type="primary">Ptgfrn</name>
    <name type="synonym">Fprp</name>
</gene>
<name>FPRP_MOUSE</name>
<sequence length="879" mass="98722">MGRPAPRPLLLALLSLAVCRGRVVRVPAGTLVRVVGTELVIPCNVSDYDGPSEQNFDWSFSSSGSSFVELASTWEVGFPAQLYRERLQRGDILLRRTANDAVELHIKNVQPSDQGHYKCSTPSTDATVQGNYEDTVQVKVLADALVVGPSSRPPPGLSLREGEPFELRCIASTTSPLHTHLALRWELHRGPVHRSILALSHEGRFHPGPGYEQRYHSGDVRLDTVGSDAYRLSVARALSADQGSYRCVVSEWITEQGSWQEIQEKAVEVATVVIQPTALQLAVPRTVSVTEGKDLDLSCNITTDRVDDVRPEVTWYFKKTPDTSLLASHMLARLDRDSLVHSSPHVALSHVDTRSYHLLVRDVSKENSGYYLCLVALWAPGHNRSWHKVAEAMSAPSGVSVTWLEPEYQVYLNASKVPGFSDDPTELQCRVIDTKRLEAGVRLTVSWYYRMTRRNDDVVASELLAVMDGDWTLRYGERSKQRAQDGEFIFSKEHTDTFNFRIQRTTEEDRGNYYCVVSAWTRQRNNSWVKSKDVFSKPVNIFWASEDSVLVVKARQPKPFFAAGNTFEMTCKVSSKNIKSPRYSVLITAEKPVGDLSSPNETKYIISLDQDSVVKLENWTDASRVDGVVLEKVQEDEFRYRMYQTQVSDAGLYRCMVTAWSPIGGSLWREAATSLSNPIEIDFQTSGPTFNASVHSDTPSVTRGDLIKLFCIVTVEGAVLDPDDMAFDVSWFAVHSFGLDKAPVLLSSLDRKGVVTTGQRDWKSTVSLERVSVLEFLLQVHGSEDQDFGNYYCSVTPWVRSPTGSWQREAEIHSRPIFITVKMDVLNAFKYPLLIGVGLSTVIGLLSCLIGYCSSHWCCKKEVRETRRERRRLMSMEMD</sequence>
<comment type="function">
    <text evidence="1 8">Inhibits the binding of prostaglandin F2-alpha (PGF2-alpha) to its specific FP receptor, by decreasing the receptor number rather than the affinity constant. Functional coupling with the prostaglandin F2-alpha receptor seems to occur (By similarity). In myoblasts, associates with tetraspanins CD9 and CD81 to prevent myotube fusion during muscle regeneration.</text>
</comment>
<comment type="subunit">
    <text evidence="3 8">Interacts with CD9 and CD81 (By similarity). Part of a complex composed of CD9, CD81 and IGSF8 (PubMed:23575678). Also seems to interact with CD63, CD82 and CD151 (By similarity).</text>
</comment>
<comment type="subcellular location">
    <subcellularLocation>
        <location evidence="1">Endoplasmic reticulum membrane</location>
        <topology evidence="1">Single-pass type I membrane protein</topology>
    </subcellularLocation>
    <subcellularLocation>
        <location evidence="1">Golgi apparatus</location>
        <location evidence="1">trans-Golgi network membrane</location>
        <topology evidence="1">Single-pass type I membrane protein</topology>
    </subcellularLocation>
</comment>
<comment type="tissue specificity">
    <text evidence="8">Expressed in myoblasts (at protein level).</text>
</comment>